<name>WHIA_DESRM</name>
<proteinExistence type="inferred from homology"/>
<comment type="function">
    <text evidence="1">Involved in cell division and chromosome segregation.</text>
</comment>
<comment type="similarity">
    <text evidence="1">Belongs to the WhiA family.</text>
</comment>
<sequence>MSFSAVTKNELARVVGSKKCCRMAELAALIKMDGSVQISGQKKFSLNIVTENAAVARKIFTLLKNLFGLSTEIMVRRKVRLRKNNVYIVRIPAQPGIEEIFKALGFQAGSFSFTEEGIVKDLIARDCCRKAYLRGAFLGGGSVNNPEGTYHLEIITDNQKHAQDLVELMQYFQLPAKVSPRKNWYVVYLKGSEQIIDCLNLMEAHSALLDFENARIYKGVRNQVNRLVNCETANLNKTVNAAVRQLENIKFLADRIGLEKLPKPLKETAEYRLQYPDASLKELGELWTPPVGKSGVNHRIRKIERLAEKLRSGKEYHGYKED</sequence>
<evidence type="ECO:0000255" key="1">
    <source>
        <dbReference type="HAMAP-Rule" id="MF_01420"/>
    </source>
</evidence>
<dbReference type="EMBL" id="CP000612">
    <property type="protein sequence ID" value="ABO51497.1"/>
    <property type="molecule type" value="Genomic_DNA"/>
</dbReference>
<dbReference type="RefSeq" id="WP_011879288.1">
    <property type="nucleotide sequence ID" value="NC_009253.1"/>
</dbReference>
<dbReference type="SMR" id="A4J8U4"/>
<dbReference type="STRING" id="349161.Dred_2994"/>
<dbReference type="KEGG" id="drm:Dred_2994"/>
<dbReference type="eggNOG" id="COG1481">
    <property type="taxonomic scope" value="Bacteria"/>
</dbReference>
<dbReference type="HOGENOM" id="CLU_053282_0_0_9"/>
<dbReference type="OrthoDB" id="401278at2"/>
<dbReference type="Proteomes" id="UP000001556">
    <property type="component" value="Chromosome"/>
</dbReference>
<dbReference type="GO" id="GO:0003677">
    <property type="term" value="F:DNA binding"/>
    <property type="evidence" value="ECO:0007669"/>
    <property type="project" value="UniProtKB-UniRule"/>
</dbReference>
<dbReference type="GO" id="GO:0051301">
    <property type="term" value="P:cell division"/>
    <property type="evidence" value="ECO:0007669"/>
    <property type="project" value="UniProtKB-UniRule"/>
</dbReference>
<dbReference type="GO" id="GO:0043937">
    <property type="term" value="P:regulation of sporulation"/>
    <property type="evidence" value="ECO:0007669"/>
    <property type="project" value="InterPro"/>
</dbReference>
<dbReference type="Gene3D" id="3.10.28.10">
    <property type="entry name" value="Homing endonucleases"/>
    <property type="match status" value="1"/>
</dbReference>
<dbReference type="HAMAP" id="MF_01420">
    <property type="entry name" value="HTH_type_WhiA"/>
    <property type="match status" value="1"/>
</dbReference>
<dbReference type="InterPro" id="IPR027434">
    <property type="entry name" value="Homing_endonucl"/>
</dbReference>
<dbReference type="InterPro" id="IPR018478">
    <property type="entry name" value="Sporu_reg_WhiA_N_dom"/>
</dbReference>
<dbReference type="InterPro" id="IPR003802">
    <property type="entry name" value="Sporulation_regulator_WhiA"/>
</dbReference>
<dbReference type="InterPro" id="IPR023054">
    <property type="entry name" value="Sporulation_regulator_WhiA_C"/>
</dbReference>
<dbReference type="InterPro" id="IPR039518">
    <property type="entry name" value="WhiA_LAGLIDADG_dom"/>
</dbReference>
<dbReference type="NCBIfam" id="TIGR00647">
    <property type="entry name" value="DNA_bind_WhiA"/>
    <property type="match status" value="1"/>
</dbReference>
<dbReference type="PANTHER" id="PTHR37307">
    <property type="entry name" value="CELL DIVISION PROTEIN WHIA-RELATED"/>
    <property type="match status" value="1"/>
</dbReference>
<dbReference type="PANTHER" id="PTHR37307:SF1">
    <property type="entry name" value="CELL DIVISION PROTEIN WHIA-RELATED"/>
    <property type="match status" value="1"/>
</dbReference>
<dbReference type="Pfam" id="PF02650">
    <property type="entry name" value="HTH_WhiA"/>
    <property type="match status" value="1"/>
</dbReference>
<dbReference type="Pfam" id="PF14527">
    <property type="entry name" value="LAGLIDADG_WhiA"/>
    <property type="match status" value="1"/>
</dbReference>
<dbReference type="Pfam" id="PF10298">
    <property type="entry name" value="WhiA_N"/>
    <property type="match status" value="1"/>
</dbReference>
<dbReference type="SUPFAM" id="SSF55608">
    <property type="entry name" value="Homing endonucleases"/>
    <property type="match status" value="1"/>
</dbReference>
<gene>
    <name evidence="1" type="primary">whiA</name>
    <name type="ordered locus">Dred_2994</name>
</gene>
<reference key="1">
    <citation type="submission" date="2007-03" db="EMBL/GenBank/DDBJ databases">
        <title>Complete sequence of Desulfotomaculum reducens MI-1.</title>
        <authorList>
            <consortium name="US DOE Joint Genome Institute"/>
            <person name="Copeland A."/>
            <person name="Lucas S."/>
            <person name="Lapidus A."/>
            <person name="Barry K."/>
            <person name="Detter J.C."/>
            <person name="Glavina del Rio T."/>
            <person name="Hammon N."/>
            <person name="Israni S."/>
            <person name="Dalin E."/>
            <person name="Tice H."/>
            <person name="Pitluck S."/>
            <person name="Sims D."/>
            <person name="Brettin T."/>
            <person name="Bruce D."/>
            <person name="Han C."/>
            <person name="Tapia R."/>
            <person name="Schmutz J."/>
            <person name="Larimer F."/>
            <person name="Land M."/>
            <person name="Hauser L."/>
            <person name="Kyrpides N."/>
            <person name="Kim E."/>
            <person name="Tebo B.M."/>
            <person name="Richardson P."/>
        </authorList>
    </citation>
    <scope>NUCLEOTIDE SEQUENCE [LARGE SCALE GENOMIC DNA]</scope>
    <source>
        <strain>ATCC BAA-1160 / DSM 100696 / MI-1</strain>
    </source>
</reference>
<keyword id="KW-0131">Cell cycle</keyword>
<keyword id="KW-0132">Cell division</keyword>
<keyword id="KW-0238">DNA-binding</keyword>
<keyword id="KW-1185">Reference proteome</keyword>
<accession>A4J8U4</accession>
<organism>
    <name type="scientific">Desulforamulus reducens (strain ATCC BAA-1160 / DSM 100696 / MI-1)</name>
    <name type="common">Desulfotomaculum reducens</name>
    <dbReference type="NCBI Taxonomy" id="349161"/>
    <lineage>
        <taxon>Bacteria</taxon>
        <taxon>Bacillati</taxon>
        <taxon>Bacillota</taxon>
        <taxon>Clostridia</taxon>
        <taxon>Eubacteriales</taxon>
        <taxon>Peptococcaceae</taxon>
        <taxon>Desulforamulus</taxon>
    </lineage>
</organism>
<protein>
    <recommendedName>
        <fullName evidence="1">Probable cell division protein WhiA</fullName>
    </recommendedName>
</protein>
<feature type="chain" id="PRO_0000376481" description="Probable cell division protein WhiA">
    <location>
        <begin position="1"/>
        <end position="322"/>
    </location>
</feature>
<feature type="DNA-binding region" description="H-T-H motif" evidence="1">
    <location>
        <begin position="279"/>
        <end position="312"/>
    </location>
</feature>